<keyword id="KW-1185">Reference proteome</keyword>
<keyword id="KW-0687">Ribonucleoprotein</keyword>
<keyword id="KW-0689">Ribosomal protein</keyword>
<keyword id="KW-0694">RNA-binding</keyword>
<keyword id="KW-0699">rRNA-binding</keyword>
<reference key="1">
    <citation type="journal article" date="2005" name="Proc. Natl. Acad. Sci. U.S.A.">
        <title>Complete genome sequence of the probiotic lactic acid bacterium Lactobacillus acidophilus NCFM.</title>
        <authorList>
            <person name="Altermann E."/>
            <person name="Russell W.M."/>
            <person name="Azcarate-Peril M.A."/>
            <person name="Barrangou R."/>
            <person name="Buck B.L."/>
            <person name="McAuliffe O."/>
            <person name="Souther N."/>
            <person name="Dobson A."/>
            <person name="Duong T."/>
            <person name="Callanan M."/>
            <person name="Lick S."/>
            <person name="Hamrick A."/>
            <person name="Cano R."/>
            <person name="Klaenhammer T.R."/>
        </authorList>
    </citation>
    <scope>NUCLEOTIDE SEQUENCE [LARGE SCALE GENOMIC DNA]</scope>
    <source>
        <strain>ATCC 700396 / NCK56 / N2 / NCFM</strain>
    </source>
</reference>
<feature type="chain" id="PRO_0000242385" description="Large ribosomal subunit protein uL4">
    <location>
        <begin position="1"/>
        <end position="205"/>
    </location>
</feature>
<feature type="region of interest" description="Disordered" evidence="2">
    <location>
        <begin position="43"/>
        <end position="97"/>
    </location>
</feature>
<feature type="compositionally biased region" description="Basic residues" evidence="2">
    <location>
        <begin position="51"/>
        <end position="71"/>
    </location>
</feature>
<accession>Q5FM89</accession>
<organism>
    <name type="scientific">Lactobacillus acidophilus (strain ATCC 700396 / NCK56 / N2 / NCFM)</name>
    <dbReference type="NCBI Taxonomy" id="272621"/>
    <lineage>
        <taxon>Bacteria</taxon>
        <taxon>Bacillati</taxon>
        <taxon>Bacillota</taxon>
        <taxon>Bacilli</taxon>
        <taxon>Lactobacillales</taxon>
        <taxon>Lactobacillaceae</taxon>
        <taxon>Lactobacillus</taxon>
    </lineage>
</organism>
<name>RL4_LACAC</name>
<evidence type="ECO:0000255" key="1">
    <source>
        <dbReference type="HAMAP-Rule" id="MF_01328"/>
    </source>
</evidence>
<evidence type="ECO:0000256" key="2">
    <source>
        <dbReference type="SAM" id="MobiDB-lite"/>
    </source>
</evidence>
<evidence type="ECO:0000305" key="3"/>
<gene>
    <name evidence="1" type="primary">rplD</name>
    <name type="ordered locus">LBA0292</name>
</gene>
<protein>
    <recommendedName>
        <fullName evidence="1">Large ribosomal subunit protein uL4</fullName>
    </recommendedName>
    <alternativeName>
        <fullName evidence="3">50S ribosomal protein L4</fullName>
    </alternativeName>
</protein>
<dbReference type="EMBL" id="CP000033">
    <property type="protein sequence ID" value="AAV42185.1"/>
    <property type="molecule type" value="Genomic_DNA"/>
</dbReference>
<dbReference type="RefSeq" id="WP_003549025.1">
    <property type="nucleotide sequence ID" value="NC_006814.3"/>
</dbReference>
<dbReference type="RefSeq" id="YP_193216.1">
    <property type="nucleotide sequence ID" value="NC_006814.3"/>
</dbReference>
<dbReference type="SMR" id="Q5FM89"/>
<dbReference type="STRING" id="272621.LBA0292"/>
<dbReference type="GeneID" id="93290600"/>
<dbReference type="KEGG" id="lac:LBA0292"/>
<dbReference type="PATRIC" id="fig|272621.13.peg.277"/>
<dbReference type="eggNOG" id="COG0088">
    <property type="taxonomic scope" value="Bacteria"/>
</dbReference>
<dbReference type="HOGENOM" id="CLU_041575_5_2_9"/>
<dbReference type="OrthoDB" id="9803201at2"/>
<dbReference type="BioCyc" id="LACI272621:G1G49-286-MONOMER"/>
<dbReference type="Proteomes" id="UP000006381">
    <property type="component" value="Chromosome"/>
</dbReference>
<dbReference type="GO" id="GO:1990904">
    <property type="term" value="C:ribonucleoprotein complex"/>
    <property type="evidence" value="ECO:0007669"/>
    <property type="project" value="UniProtKB-KW"/>
</dbReference>
<dbReference type="GO" id="GO:0005840">
    <property type="term" value="C:ribosome"/>
    <property type="evidence" value="ECO:0007669"/>
    <property type="project" value="UniProtKB-KW"/>
</dbReference>
<dbReference type="GO" id="GO:0019843">
    <property type="term" value="F:rRNA binding"/>
    <property type="evidence" value="ECO:0007669"/>
    <property type="project" value="UniProtKB-UniRule"/>
</dbReference>
<dbReference type="GO" id="GO:0003735">
    <property type="term" value="F:structural constituent of ribosome"/>
    <property type="evidence" value="ECO:0007669"/>
    <property type="project" value="InterPro"/>
</dbReference>
<dbReference type="GO" id="GO:0006412">
    <property type="term" value="P:translation"/>
    <property type="evidence" value="ECO:0007669"/>
    <property type="project" value="UniProtKB-UniRule"/>
</dbReference>
<dbReference type="FunFam" id="3.40.1370.10:FF:000003">
    <property type="entry name" value="50S ribosomal protein L4"/>
    <property type="match status" value="1"/>
</dbReference>
<dbReference type="Gene3D" id="3.40.1370.10">
    <property type="match status" value="1"/>
</dbReference>
<dbReference type="HAMAP" id="MF_01328_B">
    <property type="entry name" value="Ribosomal_uL4_B"/>
    <property type="match status" value="1"/>
</dbReference>
<dbReference type="InterPro" id="IPR002136">
    <property type="entry name" value="Ribosomal_uL4"/>
</dbReference>
<dbReference type="InterPro" id="IPR013005">
    <property type="entry name" value="Ribosomal_uL4-like"/>
</dbReference>
<dbReference type="InterPro" id="IPR023574">
    <property type="entry name" value="Ribosomal_uL4_dom_sf"/>
</dbReference>
<dbReference type="NCBIfam" id="TIGR03953">
    <property type="entry name" value="rplD_bact"/>
    <property type="match status" value="1"/>
</dbReference>
<dbReference type="PANTHER" id="PTHR10746">
    <property type="entry name" value="50S RIBOSOMAL PROTEIN L4"/>
    <property type="match status" value="1"/>
</dbReference>
<dbReference type="PANTHER" id="PTHR10746:SF6">
    <property type="entry name" value="LARGE RIBOSOMAL SUBUNIT PROTEIN UL4M"/>
    <property type="match status" value="1"/>
</dbReference>
<dbReference type="Pfam" id="PF00573">
    <property type="entry name" value="Ribosomal_L4"/>
    <property type="match status" value="1"/>
</dbReference>
<dbReference type="SUPFAM" id="SSF52166">
    <property type="entry name" value="Ribosomal protein L4"/>
    <property type="match status" value="1"/>
</dbReference>
<proteinExistence type="inferred from homology"/>
<sequence>MANLKVMDQNGKDSGEVTLNDKVFGIEPNDNVVFEAIIRQRAGKRQGTSKVKNRSAVRGGGKKPWRQKGTGRARQGSIRAPQWRGGGTVFGPTPRSYAYTMPRKQRRLAIKSVLSQKLIDNDLIVLDKLTMSAPKTKELVSMLNSLNADGKVLIVSDDNNVQLSARNLAKVKVVPVNGLNVEDAVNYGKLILTQDAVKKIEEVLA</sequence>
<comment type="function">
    <text evidence="1">One of the primary rRNA binding proteins, this protein initially binds near the 5'-end of the 23S rRNA. It is important during the early stages of 50S assembly. It makes multiple contacts with different domains of the 23S rRNA in the assembled 50S subunit and ribosome.</text>
</comment>
<comment type="function">
    <text evidence="1">Forms part of the polypeptide exit tunnel.</text>
</comment>
<comment type="subunit">
    <text evidence="1">Part of the 50S ribosomal subunit.</text>
</comment>
<comment type="similarity">
    <text evidence="1">Belongs to the universal ribosomal protein uL4 family.</text>
</comment>